<reference key="1">
    <citation type="journal article" date="2007" name="Science">
        <title>The Calyptogena magnifica chemoautotrophic symbiont genome.</title>
        <authorList>
            <person name="Newton I.L.G."/>
            <person name="Woyke T."/>
            <person name="Auchtung T.A."/>
            <person name="Dilly G.F."/>
            <person name="Dutton R.J."/>
            <person name="Fisher M.C."/>
            <person name="Fontanez K.M."/>
            <person name="Lau E."/>
            <person name="Stewart F.J."/>
            <person name="Richardson P.M."/>
            <person name="Barry K.W."/>
            <person name="Saunders E."/>
            <person name="Detter J.C."/>
            <person name="Wu D."/>
            <person name="Eisen J.A."/>
            <person name="Cavanaugh C.M."/>
        </authorList>
    </citation>
    <scope>NUCLEOTIDE SEQUENCE [LARGE SCALE GENOMIC DNA]</scope>
</reference>
<name>SAT_RUTMC</name>
<proteinExistence type="inferred from homology"/>
<feature type="chain" id="PRO_0000340631" description="Sulfate adenylyltransferase">
    <location>
        <begin position="1"/>
        <end position="402"/>
    </location>
</feature>
<sequence length="402" mass="44508">MTKLVPPHGSDTLKSLALEGNALTVELERAKLLPKINCSSREEGDIIMMGVGGFTPLEGFMGKADWQSVCDNMTIESGLFWPIPITLSTDNEGVNQGDEVALVNGETDEIIATMVISEKYSIDKTHECNTVYKTTEIEHPGVVMVMAQGKYNLAGSIKVLSDGGFPEKYSSLYMTPMETRAYFDDKGWKTVAAFQTRNPMHRSHEYLVKIAVEVCDGVMIHSVLGNLKAGDIPANVRSEAISVLIENYFVDNTILQSGYPLDMRYAGPREALLHALFRQNYGCSHLIVGRDHAGIDDYYGPFDAHNIFDEIADDALMTKALKIDWTFWCHKCGGMSSMKTCPHSAEDRALLSGTKVRKMLSDSEDLPETFSRPEVAKVLQAYYAGIKDEDKVEIKLNGHSAK</sequence>
<organism>
    <name type="scientific">Ruthia magnifica subsp. Calyptogena magnifica</name>
    <dbReference type="NCBI Taxonomy" id="413404"/>
    <lineage>
        <taxon>Bacteria</taxon>
        <taxon>Pseudomonadati</taxon>
        <taxon>Pseudomonadota</taxon>
        <taxon>Gammaproteobacteria</taxon>
        <taxon>Candidatus Pseudothioglobaceae</taxon>
        <taxon>Candidatus Ruthturnera</taxon>
    </lineage>
</organism>
<evidence type="ECO:0000255" key="1">
    <source>
        <dbReference type="HAMAP-Rule" id="MF_00066"/>
    </source>
</evidence>
<dbReference type="EC" id="2.7.7.4" evidence="1"/>
<dbReference type="EMBL" id="CP000488">
    <property type="protein sequence ID" value="ABL01884.1"/>
    <property type="molecule type" value="Genomic_DNA"/>
</dbReference>
<dbReference type="RefSeq" id="WP_011737510.1">
    <property type="nucleotide sequence ID" value="NC_008610.1"/>
</dbReference>
<dbReference type="SMR" id="A1AVC7"/>
<dbReference type="STRING" id="413404.Rmag_0085"/>
<dbReference type="KEGG" id="rma:Rmag_0085"/>
<dbReference type="eggNOG" id="COG2046">
    <property type="taxonomic scope" value="Bacteria"/>
</dbReference>
<dbReference type="HOGENOM" id="CLU_022950_1_1_6"/>
<dbReference type="OrthoDB" id="9804504at2"/>
<dbReference type="UniPathway" id="UPA00140">
    <property type="reaction ID" value="UER00204"/>
</dbReference>
<dbReference type="Proteomes" id="UP000002587">
    <property type="component" value="Chromosome"/>
</dbReference>
<dbReference type="GO" id="GO:0005524">
    <property type="term" value="F:ATP binding"/>
    <property type="evidence" value="ECO:0007669"/>
    <property type="project" value="UniProtKB-KW"/>
</dbReference>
<dbReference type="GO" id="GO:0004781">
    <property type="term" value="F:sulfate adenylyltransferase (ATP) activity"/>
    <property type="evidence" value="ECO:0007669"/>
    <property type="project" value="UniProtKB-UniRule"/>
</dbReference>
<dbReference type="GO" id="GO:0070814">
    <property type="term" value="P:hydrogen sulfide biosynthetic process"/>
    <property type="evidence" value="ECO:0007669"/>
    <property type="project" value="UniProtKB-UniRule"/>
</dbReference>
<dbReference type="GO" id="GO:0000103">
    <property type="term" value="P:sulfate assimilation"/>
    <property type="evidence" value="ECO:0007669"/>
    <property type="project" value="UniProtKB-UniRule"/>
</dbReference>
<dbReference type="CDD" id="cd00517">
    <property type="entry name" value="ATPS"/>
    <property type="match status" value="1"/>
</dbReference>
<dbReference type="Gene3D" id="3.40.50.620">
    <property type="entry name" value="HUPs"/>
    <property type="match status" value="1"/>
</dbReference>
<dbReference type="Gene3D" id="3.10.400.10">
    <property type="entry name" value="Sulfate adenylyltransferase"/>
    <property type="match status" value="1"/>
</dbReference>
<dbReference type="HAMAP" id="MF_00066">
    <property type="entry name" value="Sulf_adenylyltr"/>
    <property type="match status" value="1"/>
</dbReference>
<dbReference type="InterPro" id="IPR025980">
    <property type="entry name" value="ATP-Sase_PUA-like_dom"/>
</dbReference>
<dbReference type="InterPro" id="IPR015947">
    <property type="entry name" value="PUA-like_sf"/>
</dbReference>
<dbReference type="InterPro" id="IPR014729">
    <property type="entry name" value="Rossmann-like_a/b/a_fold"/>
</dbReference>
<dbReference type="InterPro" id="IPR020792">
    <property type="entry name" value="SO4_adenylyltransferase_pro"/>
</dbReference>
<dbReference type="InterPro" id="IPR024951">
    <property type="entry name" value="Sulfurylase_cat_dom"/>
</dbReference>
<dbReference type="InterPro" id="IPR002650">
    <property type="entry name" value="Sulphate_adenylyltransferase"/>
</dbReference>
<dbReference type="NCBIfam" id="NF003166">
    <property type="entry name" value="PRK04149.1"/>
    <property type="match status" value="1"/>
</dbReference>
<dbReference type="NCBIfam" id="TIGR00339">
    <property type="entry name" value="sopT"/>
    <property type="match status" value="1"/>
</dbReference>
<dbReference type="PANTHER" id="PTHR43509">
    <property type="match status" value="1"/>
</dbReference>
<dbReference type="PANTHER" id="PTHR43509:SF1">
    <property type="entry name" value="SULFATE ADENYLYLTRANSFERASE"/>
    <property type="match status" value="1"/>
</dbReference>
<dbReference type="Pfam" id="PF01747">
    <property type="entry name" value="ATP-sulfurylase"/>
    <property type="match status" value="1"/>
</dbReference>
<dbReference type="Pfam" id="PF14306">
    <property type="entry name" value="PUA_2"/>
    <property type="match status" value="1"/>
</dbReference>
<dbReference type="SUPFAM" id="SSF52374">
    <property type="entry name" value="Nucleotidylyl transferase"/>
    <property type="match status" value="1"/>
</dbReference>
<dbReference type="SUPFAM" id="SSF88697">
    <property type="entry name" value="PUA domain-like"/>
    <property type="match status" value="1"/>
</dbReference>
<comment type="catalytic activity">
    <reaction evidence="1">
        <text>sulfate + ATP + H(+) = adenosine 5'-phosphosulfate + diphosphate</text>
        <dbReference type="Rhea" id="RHEA:18133"/>
        <dbReference type="ChEBI" id="CHEBI:15378"/>
        <dbReference type="ChEBI" id="CHEBI:16189"/>
        <dbReference type="ChEBI" id="CHEBI:30616"/>
        <dbReference type="ChEBI" id="CHEBI:33019"/>
        <dbReference type="ChEBI" id="CHEBI:58243"/>
        <dbReference type="EC" id="2.7.7.4"/>
    </reaction>
</comment>
<comment type="pathway">
    <text evidence="1">Sulfur metabolism; hydrogen sulfide biosynthesis; sulfite from sulfate: step 1/3.</text>
</comment>
<comment type="similarity">
    <text evidence="1">Belongs to the sulfate adenylyltransferase family.</text>
</comment>
<accession>A1AVC7</accession>
<protein>
    <recommendedName>
        <fullName evidence="1">Sulfate adenylyltransferase</fullName>
        <ecNumber evidence="1">2.7.7.4</ecNumber>
    </recommendedName>
    <alternativeName>
        <fullName evidence="1">ATP-sulfurylase</fullName>
    </alternativeName>
    <alternativeName>
        <fullName evidence="1">Sulfate adenylate transferase</fullName>
        <shortName evidence="1">SAT</shortName>
    </alternativeName>
</protein>
<keyword id="KW-0067">ATP-binding</keyword>
<keyword id="KW-0547">Nucleotide-binding</keyword>
<keyword id="KW-0548">Nucleotidyltransferase</keyword>
<keyword id="KW-0808">Transferase</keyword>
<gene>
    <name evidence="1" type="primary">sat</name>
    <name type="ordered locus">Rmag_0085</name>
</gene>